<organism>
    <name type="scientific">Desulfatibacillum aliphaticivorans</name>
    <dbReference type="NCBI Taxonomy" id="218208"/>
    <lineage>
        <taxon>Bacteria</taxon>
        <taxon>Pseudomonadati</taxon>
        <taxon>Thermodesulfobacteriota</taxon>
        <taxon>Desulfobacteria</taxon>
        <taxon>Desulfobacterales</taxon>
        <taxon>Desulfatibacillaceae</taxon>
        <taxon>Desulfatibacillum</taxon>
    </lineage>
</organism>
<feature type="chain" id="PRO_1000122305" description="Large ribosomal subunit protein bL20">
    <location>
        <begin position="1"/>
        <end position="116"/>
    </location>
</feature>
<sequence length="116" mass="13280">MRVKRGFKARRRRKKVLKLAKGFRGGHSKLYRTAADTVDRALMYAYRDRRQKKRDFRALWIARINAGARMNGLSYSKFIYGLKQADVALDRKVLAELAISDPACFAEITSLAAKQA</sequence>
<dbReference type="EMBL" id="CP001322">
    <property type="protein sequence ID" value="ACL03497.1"/>
    <property type="molecule type" value="Genomic_DNA"/>
</dbReference>
<dbReference type="SMR" id="B8FFU2"/>
<dbReference type="KEGG" id="dal:Dalk_1800"/>
<dbReference type="eggNOG" id="COG0292">
    <property type="taxonomic scope" value="Bacteria"/>
</dbReference>
<dbReference type="HOGENOM" id="CLU_123265_0_1_7"/>
<dbReference type="Proteomes" id="UP000000739">
    <property type="component" value="Chromosome"/>
</dbReference>
<dbReference type="GO" id="GO:1990904">
    <property type="term" value="C:ribonucleoprotein complex"/>
    <property type="evidence" value="ECO:0007669"/>
    <property type="project" value="UniProtKB-KW"/>
</dbReference>
<dbReference type="GO" id="GO:0005840">
    <property type="term" value="C:ribosome"/>
    <property type="evidence" value="ECO:0007669"/>
    <property type="project" value="UniProtKB-KW"/>
</dbReference>
<dbReference type="GO" id="GO:0019843">
    <property type="term" value="F:rRNA binding"/>
    <property type="evidence" value="ECO:0007669"/>
    <property type="project" value="UniProtKB-UniRule"/>
</dbReference>
<dbReference type="GO" id="GO:0003735">
    <property type="term" value="F:structural constituent of ribosome"/>
    <property type="evidence" value="ECO:0007669"/>
    <property type="project" value="InterPro"/>
</dbReference>
<dbReference type="GO" id="GO:0000027">
    <property type="term" value="P:ribosomal large subunit assembly"/>
    <property type="evidence" value="ECO:0007669"/>
    <property type="project" value="UniProtKB-UniRule"/>
</dbReference>
<dbReference type="GO" id="GO:0006412">
    <property type="term" value="P:translation"/>
    <property type="evidence" value="ECO:0007669"/>
    <property type="project" value="InterPro"/>
</dbReference>
<dbReference type="CDD" id="cd07026">
    <property type="entry name" value="Ribosomal_L20"/>
    <property type="match status" value="1"/>
</dbReference>
<dbReference type="FunFam" id="1.10.1900.20:FF:000001">
    <property type="entry name" value="50S ribosomal protein L20"/>
    <property type="match status" value="1"/>
</dbReference>
<dbReference type="Gene3D" id="6.10.160.10">
    <property type="match status" value="1"/>
</dbReference>
<dbReference type="Gene3D" id="1.10.1900.20">
    <property type="entry name" value="Ribosomal protein L20"/>
    <property type="match status" value="1"/>
</dbReference>
<dbReference type="HAMAP" id="MF_00382">
    <property type="entry name" value="Ribosomal_bL20"/>
    <property type="match status" value="1"/>
</dbReference>
<dbReference type="InterPro" id="IPR005813">
    <property type="entry name" value="Ribosomal_bL20"/>
</dbReference>
<dbReference type="InterPro" id="IPR049946">
    <property type="entry name" value="RIBOSOMAL_L20_CS"/>
</dbReference>
<dbReference type="InterPro" id="IPR035566">
    <property type="entry name" value="Ribosomal_protein_bL20_C"/>
</dbReference>
<dbReference type="NCBIfam" id="TIGR01032">
    <property type="entry name" value="rplT_bact"/>
    <property type="match status" value="1"/>
</dbReference>
<dbReference type="PANTHER" id="PTHR10986">
    <property type="entry name" value="39S RIBOSOMAL PROTEIN L20"/>
    <property type="match status" value="1"/>
</dbReference>
<dbReference type="Pfam" id="PF00453">
    <property type="entry name" value="Ribosomal_L20"/>
    <property type="match status" value="1"/>
</dbReference>
<dbReference type="PRINTS" id="PR00062">
    <property type="entry name" value="RIBOSOMALL20"/>
</dbReference>
<dbReference type="SUPFAM" id="SSF74731">
    <property type="entry name" value="Ribosomal protein L20"/>
    <property type="match status" value="1"/>
</dbReference>
<dbReference type="PROSITE" id="PS00937">
    <property type="entry name" value="RIBOSOMAL_L20"/>
    <property type="match status" value="1"/>
</dbReference>
<proteinExistence type="inferred from homology"/>
<reference key="1">
    <citation type="journal article" date="2012" name="Environ. Microbiol.">
        <title>The genome sequence of Desulfatibacillum alkenivorans AK-01: a blueprint for anaerobic alkane oxidation.</title>
        <authorList>
            <person name="Callaghan A.V."/>
            <person name="Morris B.E."/>
            <person name="Pereira I.A."/>
            <person name="McInerney M.J."/>
            <person name="Austin R.N."/>
            <person name="Groves J.T."/>
            <person name="Kukor J.J."/>
            <person name="Suflita J.M."/>
            <person name="Young L.Y."/>
            <person name="Zylstra G.J."/>
            <person name="Wawrik B."/>
        </authorList>
    </citation>
    <scope>NUCLEOTIDE SEQUENCE [LARGE SCALE GENOMIC DNA]</scope>
    <source>
        <strain>AK-01</strain>
    </source>
</reference>
<accession>B8FFU2</accession>
<name>RL20_DESAL</name>
<evidence type="ECO:0000255" key="1">
    <source>
        <dbReference type="HAMAP-Rule" id="MF_00382"/>
    </source>
</evidence>
<evidence type="ECO:0000305" key="2"/>
<protein>
    <recommendedName>
        <fullName evidence="1">Large ribosomal subunit protein bL20</fullName>
    </recommendedName>
    <alternativeName>
        <fullName evidence="2">50S ribosomal protein L20</fullName>
    </alternativeName>
</protein>
<keyword id="KW-1185">Reference proteome</keyword>
<keyword id="KW-0687">Ribonucleoprotein</keyword>
<keyword id="KW-0689">Ribosomal protein</keyword>
<keyword id="KW-0694">RNA-binding</keyword>
<keyword id="KW-0699">rRNA-binding</keyword>
<comment type="function">
    <text evidence="1">Binds directly to 23S ribosomal RNA and is necessary for the in vitro assembly process of the 50S ribosomal subunit. It is not involved in the protein synthesizing functions of that subunit.</text>
</comment>
<comment type="similarity">
    <text evidence="1">Belongs to the bacterial ribosomal protein bL20 family.</text>
</comment>
<gene>
    <name evidence="1" type="primary">rplT</name>
    <name type="ordered locus">Dalk_1800</name>
</gene>